<gene>
    <name evidence="1" type="primary">purM</name>
    <name type="ordered locus">USA300HOU_1016</name>
</gene>
<sequence>MSKAYEQSGVNIHAGYEAVERMSSHVKRTMRKEVIGGLGGFGATFDLSQLNMTAPVLVSGTDGVGTKLKLAIDYGKHDSIGIDAVAMCVNDILTTGAEPLYFLDYIATNKVVPEVIEQIVKGISDACVETNTALIGGETAEMGEMYHEGEYDVAGFAVGAVEKDDYVDGSEVKEGQVVIGLASSGIHSNGYSLVRKLINESGIDLASNFDNRPFIDVFLEPTKLYVKPVLALKKEVSIKAMNHITGGGFYENIPRALPAGYAARIDTTSFPTPKIFDWLQQQGNIDTNEMYNIFNMGIGYTVIVDEKDVSRALKILAEQNVEAYQIGHIVKNESTAIELLGV</sequence>
<dbReference type="EC" id="6.3.3.1" evidence="1"/>
<dbReference type="EMBL" id="CP000730">
    <property type="protein sequence ID" value="ABX29036.1"/>
    <property type="molecule type" value="Genomic_DNA"/>
</dbReference>
<dbReference type="RefSeq" id="WP_000030812.1">
    <property type="nucleotide sequence ID" value="NC_010079.1"/>
</dbReference>
<dbReference type="SMR" id="A8Z1L3"/>
<dbReference type="KEGG" id="sax:USA300HOU_1016"/>
<dbReference type="HOGENOM" id="CLU_047116_0_0_9"/>
<dbReference type="UniPathway" id="UPA00074">
    <property type="reaction ID" value="UER00129"/>
</dbReference>
<dbReference type="GO" id="GO:0005829">
    <property type="term" value="C:cytosol"/>
    <property type="evidence" value="ECO:0007669"/>
    <property type="project" value="TreeGrafter"/>
</dbReference>
<dbReference type="GO" id="GO:0005524">
    <property type="term" value="F:ATP binding"/>
    <property type="evidence" value="ECO:0007669"/>
    <property type="project" value="UniProtKB-KW"/>
</dbReference>
<dbReference type="GO" id="GO:0004637">
    <property type="term" value="F:phosphoribosylamine-glycine ligase activity"/>
    <property type="evidence" value="ECO:0007669"/>
    <property type="project" value="TreeGrafter"/>
</dbReference>
<dbReference type="GO" id="GO:0004641">
    <property type="term" value="F:phosphoribosylformylglycinamidine cyclo-ligase activity"/>
    <property type="evidence" value="ECO:0007669"/>
    <property type="project" value="UniProtKB-UniRule"/>
</dbReference>
<dbReference type="GO" id="GO:0006189">
    <property type="term" value="P:'de novo' IMP biosynthetic process"/>
    <property type="evidence" value="ECO:0007669"/>
    <property type="project" value="UniProtKB-UniRule"/>
</dbReference>
<dbReference type="GO" id="GO:0046084">
    <property type="term" value="P:adenine biosynthetic process"/>
    <property type="evidence" value="ECO:0007669"/>
    <property type="project" value="TreeGrafter"/>
</dbReference>
<dbReference type="CDD" id="cd02196">
    <property type="entry name" value="PurM"/>
    <property type="match status" value="1"/>
</dbReference>
<dbReference type="FunFam" id="3.30.1330.10:FF:000001">
    <property type="entry name" value="Phosphoribosylformylglycinamidine cyclo-ligase"/>
    <property type="match status" value="1"/>
</dbReference>
<dbReference type="FunFam" id="3.90.650.10:FF:000001">
    <property type="entry name" value="Phosphoribosylformylglycinamidine cyclo-ligase"/>
    <property type="match status" value="1"/>
</dbReference>
<dbReference type="Gene3D" id="3.90.650.10">
    <property type="entry name" value="PurM-like C-terminal domain"/>
    <property type="match status" value="1"/>
</dbReference>
<dbReference type="Gene3D" id="3.30.1330.10">
    <property type="entry name" value="PurM-like, N-terminal domain"/>
    <property type="match status" value="1"/>
</dbReference>
<dbReference type="HAMAP" id="MF_00741">
    <property type="entry name" value="AIRS"/>
    <property type="match status" value="1"/>
</dbReference>
<dbReference type="InterPro" id="IPR010918">
    <property type="entry name" value="PurM-like_C_dom"/>
</dbReference>
<dbReference type="InterPro" id="IPR036676">
    <property type="entry name" value="PurM-like_C_sf"/>
</dbReference>
<dbReference type="InterPro" id="IPR016188">
    <property type="entry name" value="PurM-like_N"/>
</dbReference>
<dbReference type="InterPro" id="IPR036921">
    <property type="entry name" value="PurM-like_N_sf"/>
</dbReference>
<dbReference type="InterPro" id="IPR004733">
    <property type="entry name" value="PurM_cligase"/>
</dbReference>
<dbReference type="NCBIfam" id="TIGR00878">
    <property type="entry name" value="purM"/>
    <property type="match status" value="1"/>
</dbReference>
<dbReference type="PANTHER" id="PTHR10520:SF12">
    <property type="entry name" value="TRIFUNCTIONAL PURINE BIOSYNTHETIC PROTEIN ADENOSINE-3"/>
    <property type="match status" value="1"/>
</dbReference>
<dbReference type="PANTHER" id="PTHR10520">
    <property type="entry name" value="TRIFUNCTIONAL PURINE BIOSYNTHETIC PROTEIN ADENOSINE-3-RELATED"/>
    <property type="match status" value="1"/>
</dbReference>
<dbReference type="Pfam" id="PF00586">
    <property type="entry name" value="AIRS"/>
    <property type="match status" value="1"/>
</dbReference>
<dbReference type="Pfam" id="PF02769">
    <property type="entry name" value="AIRS_C"/>
    <property type="match status" value="1"/>
</dbReference>
<dbReference type="SUPFAM" id="SSF56042">
    <property type="entry name" value="PurM C-terminal domain-like"/>
    <property type="match status" value="1"/>
</dbReference>
<dbReference type="SUPFAM" id="SSF55326">
    <property type="entry name" value="PurM N-terminal domain-like"/>
    <property type="match status" value="1"/>
</dbReference>
<protein>
    <recommendedName>
        <fullName evidence="1">Phosphoribosylformylglycinamidine cyclo-ligase</fullName>
        <ecNumber evidence="1">6.3.3.1</ecNumber>
    </recommendedName>
    <alternativeName>
        <fullName evidence="1">AIR synthase</fullName>
    </alternativeName>
    <alternativeName>
        <fullName evidence="1">AIRS</fullName>
    </alternativeName>
    <alternativeName>
        <fullName evidence="1">Phosphoribosyl-aminoimidazole synthetase</fullName>
    </alternativeName>
</protein>
<name>PUR5_STAAT</name>
<evidence type="ECO:0000255" key="1">
    <source>
        <dbReference type="HAMAP-Rule" id="MF_00741"/>
    </source>
</evidence>
<accession>A8Z1L3</accession>
<organism>
    <name type="scientific">Staphylococcus aureus (strain USA300 / TCH1516)</name>
    <dbReference type="NCBI Taxonomy" id="451516"/>
    <lineage>
        <taxon>Bacteria</taxon>
        <taxon>Bacillati</taxon>
        <taxon>Bacillota</taxon>
        <taxon>Bacilli</taxon>
        <taxon>Bacillales</taxon>
        <taxon>Staphylococcaceae</taxon>
        <taxon>Staphylococcus</taxon>
    </lineage>
</organism>
<comment type="catalytic activity">
    <reaction evidence="1">
        <text>2-formamido-N(1)-(5-O-phospho-beta-D-ribosyl)acetamidine + ATP = 5-amino-1-(5-phospho-beta-D-ribosyl)imidazole + ADP + phosphate + H(+)</text>
        <dbReference type="Rhea" id="RHEA:23032"/>
        <dbReference type="ChEBI" id="CHEBI:15378"/>
        <dbReference type="ChEBI" id="CHEBI:30616"/>
        <dbReference type="ChEBI" id="CHEBI:43474"/>
        <dbReference type="ChEBI" id="CHEBI:137981"/>
        <dbReference type="ChEBI" id="CHEBI:147287"/>
        <dbReference type="ChEBI" id="CHEBI:456216"/>
        <dbReference type="EC" id="6.3.3.1"/>
    </reaction>
</comment>
<comment type="pathway">
    <text evidence="1">Purine metabolism; IMP biosynthesis via de novo pathway; 5-amino-1-(5-phospho-D-ribosyl)imidazole from N(2)-formyl-N(1)-(5-phospho-D-ribosyl)glycinamide: step 2/2.</text>
</comment>
<comment type="subcellular location">
    <subcellularLocation>
        <location evidence="1">Cytoplasm</location>
    </subcellularLocation>
</comment>
<comment type="similarity">
    <text evidence="1">Belongs to the AIR synthase family.</text>
</comment>
<proteinExistence type="inferred from homology"/>
<feature type="chain" id="PRO_1000083469" description="Phosphoribosylformylglycinamidine cyclo-ligase">
    <location>
        <begin position="1"/>
        <end position="342"/>
    </location>
</feature>
<keyword id="KW-0067">ATP-binding</keyword>
<keyword id="KW-0963">Cytoplasm</keyword>
<keyword id="KW-0436">Ligase</keyword>
<keyword id="KW-0547">Nucleotide-binding</keyword>
<keyword id="KW-0658">Purine biosynthesis</keyword>
<reference key="1">
    <citation type="journal article" date="2007" name="BMC Microbiol.">
        <title>Subtle genetic changes enhance virulence of methicillin resistant and sensitive Staphylococcus aureus.</title>
        <authorList>
            <person name="Highlander S.K."/>
            <person name="Hulten K.G."/>
            <person name="Qin X."/>
            <person name="Jiang H."/>
            <person name="Yerrapragada S."/>
            <person name="Mason E.O. Jr."/>
            <person name="Shang Y."/>
            <person name="Williams T.M."/>
            <person name="Fortunov R.M."/>
            <person name="Liu Y."/>
            <person name="Igboeli O."/>
            <person name="Petrosino J."/>
            <person name="Tirumalai M."/>
            <person name="Uzman A."/>
            <person name="Fox G.E."/>
            <person name="Cardenas A.M."/>
            <person name="Muzny D.M."/>
            <person name="Hemphill L."/>
            <person name="Ding Y."/>
            <person name="Dugan S."/>
            <person name="Blyth P.R."/>
            <person name="Buhay C.J."/>
            <person name="Dinh H.H."/>
            <person name="Hawes A.C."/>
            <person name="Holder M."/>
            <person name="Kovar C.L."/>
            <person name="Lee S.L."/>
            <person name="Liu W."/>
            <person name="Nazareth L.V."/>
            <person name="Wang Q."/>
            <person name="Zhou J."/>
            <person name="Kaplan S.L."/>
            <person name="Weinstock G.M."/>
        </authorList>
    </citation>
    <scope>NUCLEOTIDE SEQUENCE [LARGE SCALE GENOMIC DNA]</scope>
    <source>
        <strain>USA300 / TCH1516</strain>
    </source>
</reference>